<organism>
    <name type="scientific">Dictyostelium discoideum</name>
    <name type="common">Social amoeba</name>
    <dbReference type="NCBI Taxonomy" id="44689"/>
    <lineage>
        <taxon>Eukaryota</taxon>
        <taxon>Amoebozoa</taxon>
        <taxon>Evosea</taxon>
        <taxon>Eumycetozoa</taxon>
        <taxon>Dictyostelia</taxon>
        <taxon>Dictyosteliales</taxon>
        <taxon>Dictyosteliaceae</taxon>
        <taxon>Dictyostelium</taxon>
    </lineage>
</organism>
<dbReference type="EMBL" id="AAFI02000035">
    <property type="protein sequence ID" value="EAL67335.1"/>
    <property type="molecule type" value="Genomic_DNA"/>
</dbReference>
<dbReference type="RefSeq" id="XP_641312.1">
    <property type="nucleotide sequence ID" value="XM_636220.1"/>
</dbReference>
<dbReference type="STRING" id="44689.Q54VP3"/>
<dbReference type="PaxDb" id="44689-DDB0206449"/>
<dbReference type="EnsemblProtists" id="EAL67335">
    <property type="protein sequence ID" value="EAL67335"/>
    <property type="gene ID" value="DDB_G0280217"/>
</dbReference>
<dbReference type="GeneID" id="8622444"/>
<dbReference type="KEGG" id="ddi:DDB_G0280217"/>
<dbReference type="dictyBase" id="DDB_G0280217"/>
<dbReference type="HOGENOM" id="CLU_2946467_0_0_1"/>
<dbReference type="InParanoid" id="Q54VP3"/>
<dbReference type="PRO" id="PR:Q54VP3"/>
<dbReference type="Proteomes" id="UP000002195">
    <property type="component" value="Chromosome 3"/>
</dbReference>
<gene>
    <name type="ORF">DDB_G0280217</name>
</gene>
<sequence length="60" mass="6835">MSIFRSLSSFNISFKSNKSNDFNFNNYNGLVNQSSNELSRWNPKETVVFVKQGGKDRIAA</sequence>
<reference key="1">
    <citation type="journal article" date="2005" name="Nature">
        <title>The genome of the social amoeba Dictyostelium discoideum.</title>
        <authorList>
            <person name="Eichinger L."/>
            <person name="Pachebat J.A."/>
            <person name="Gloeckner G."/>
            <person name="Rajandream M.A."/>
            <person name="Sucgang R."/>
            <person name="Berriman M."/>
            <person name="Song J."/>
            <person name="Olsen R."/>
            <person name="Szafranski K."/>
            <person name="Xu Q."/>
            <person name="Tunggal B."/>
            <person name="Kummerfeld S."/>
            <person name="Madera M."/>
            <person name="Konfortov B.A."/>
            <person name="Rivero F."/>
            <person name="Bankier A.T."/>
            <person name="Lehmann R."/>
            <person name="Hamlin N."/>
            <person name="Davies R."/>
            <person name="Gaudet P."/>
            <person name="Fey P."/>
            <person name="Pilcher K."/>
            <person name="Chen G."/>
            <person name="Saunders D."/>
            <person name="Sodergren E.J."/>
            <person name="Davis P."/>
            <person name="Kerhornou A."/>
            <person name="Nie X."/>
            <person name="Hall N."/>
            <person name="Anjard C."/>
            <person name="Hemphill L."/>
            <person name="Bason N."/>
            <person name="Farbrother P."/>
            <person name="Desany B."/>
            <person name="Just E."/>
            <person name="Morio T."/>
            <person name="Rost R."/>
            <person name="Churcher C.M."/>
            <person name="Cooper J."/>
            <person name="Haydock S."/>
            <person name="van Driessche N."/>
            <person name="Cronin A."/>
            <person name="Goodhead I."/>
            <person name="Muzny D.M."/>
            <person name="Mourier T."/>
            <person name="Pain A."/>
            <person name="Lu M."/>
            <person name="Harper D."/>
            <person name="Lindsay R."/>
            <person name="Hauser H."/>
            <person name="James K.D."/>
            <person name="Quiles M."/>
            <person name="Madan Babu M."/>
            <person name="Saito T."/>
            <person name="Buchrieser C."/>
            <person name="Wardroper A."/>
            <person name="Felder M."/>
            <person name="Thangavelu M."/>
            <person name="Johnson D."/>
            <person name="Knights A."/>
            <person name="Loulseged H."/>
            <person name="Mungall K.L."/>
            <person name="Oliver K."/>
            <person name="Price C."/>
            <person name="Quail M.A."/>
            <person name="Urushihara H."/>
            <person name="Hernandez J."/>
            <person name="Rabbinowitsch E."/>
            <person name="Steffen D."/>
            <person name="Sanders M."/>
            <person name="Ma J."/>
            <person name="Kohara Y."/>
            <person name="Sharp S."/>
            <person name="Simmonds M.N."/>
            <person name="Spiegler S."/>
            <person name="Tivey A."/>
            <person name="Sugano S."/>
            <person name="White B."/>
            <person name="Walker D."/>
            <person name="Woodward J.R."/>
            <person name="Winckler T."/>
            <person name="Tanaka Y."/>
            <person name="Shaulsky G."/>
            <person name="Schleicher M."/>
            <person name="Weinstock G.M."/>
            <person name="Rosenthal A."/>
            <person name="Cox E.C."/>
            <person name="Chisholm R.L."/>
            <person name="Gibbs R.A."/>
            <person name="Loomis W.F."/>
            <person name="Platzer M."/>
            <person name="Kay R.R."/>
            <person name="Williams J.G."/>
            <person name="Dear P.H."/>
            <person name="Noegel A.A."/>
            <person name="Barrell B.G."/>
            <person name="Kuspa A."/>
        </authorList>
    </citation>
    <scope>NUCLEOTIDE SEQUENCE [LARGE SCALE GENOMIC DNA]</scope>
    <source>
        <strain>AX4</strain>
    </source>
</reference>
<accession>Q54VP3</accession>
<name>Y6449_DICDI</name>
<proteinExistence type="predicted"/>
<protein>
    <recommendedName>
        <fullName>Putative uncharacterized protein DDB_G0280217</fullName>
    </recommendedName>
</protein>
<feature type="chain" id="PRO_0000352467" description="Putative uncharacterized protein DDB_G0280217">
    <location>
        <begin position="1"/>
        <end position="60"/>
    </location>
</feature>
<keyword id="KW-1185">Reference proteome</keyword>